<accession>Q9KCR5</accession>
<dbReference type="EC" id="1.2.1.41" evidence="1"/>
<dbReference type="EMBL" id="BA000004">
    <property type="protein sequence ID" value="BAB05223.1"/>
    <property type="molecule type" value="Genomic_DNA"/>
</dbReference>
<dbReference type="PIR" id="H83837">
    <property type="entry name" value="H83837"/>
</dbReference>
<dbReference type="RefSeq" id="WP_010897669.1">
    <property type="nucleotide sequence ID" value="NC_002570.2"/>
</dbReference>
<dbReference type="SMR" id="Q9KCR5"/>
<dbReference type="STRING" id="272558.gene:10727402"/>
<dbReference type="KEGG" id="bha:BH1504"/>
<dbReference type="eggNOG" id="COG0014">
    <property type="taxonomic scope" value="Bacteria"/>
</dbReference>
<dbReference type="HOGENOM" id="CLU_030231_0_0_9"/>
<dbReference type="OrthoDB" id="9809970at2"/>
<dbReference type="UniPathway" id="UPA00098">
    <property type="reaction ID" value="UER00360"/>
</dbReference>
<dbReference type="Proteomes" id="UP000001258">
    <property type="component" value="Chromosome"/>
</dbReference>
<dbReference type="GO" id="GO:0005737">
    <property type="term" value="C:cytoplasm"/>
    <property type="evidence" value="ECO:0007669"/>
    <property type="project" value="UniProtKB-SubCell"/>
</dbReference>
<dbReference type="GO" id="GO:0004350">
    <property type="term" value="F:glutamate-5-semialdehyde dehydrogenase activity"/>
    <property type="evidence" value="ECO:0007669"/>
    <property type="project" value="UniProtKB-UniRule"/>
</dbReference>
<dbReference type="GO" id="GO:0050661">
    <property type="term" value="F:NADP binding"/>
    <property type="evidence" value="ECO:0007669"/>
    <property type="project" value="InterPro"/>
</dbReference>
<dbReference type="GO" id="GO:0055129">
    <property type="term" value="P:L-proline biosynthetic process"/>
    <property type="evidence" value="ECO:0007669"/>
    <property type="project" value="UniProtKB-UniRule"/>
</dbReference>
<dbReference type="CDD" id="cd07079">
    <property type="entry name" value="ALDH_F18-19_ProA-GPR"/>
    <property type="match status" value="1"/>
</dbReference>
<dbReference type="FunFam" id="3.40.309.10:FF:000006">
    <property type="entry name" value="Gamma-glutamyl phosphate reductase"/>
    <property type="match status" value="1"/>
</dbReference>
<dbReference type="Gene3D" id="3.40.605.10">
    <property type="entry name" value="Aldehyde Dehydrogenase, Chain A, domain 1"/>
    <property type="match status" value="1"/>
</dbReference>
<dbReference type="Gene3D" id="3.40.309.10">
    <property type="entry name" value="Aldehyde Dehydrogenase, Chain A, domain 2"/>
    <property type="match status" value="1"/>
</dbReference>
<dbReference type="HAMAP" id="MF_00412">
    <property type="entry name" value="ProA"/>
    <property type="match status" value="1"/>
</dbReference>
<dbReference type="InterPro" id="IPR016161">
    <property type="entry name" value="Ald_DH/histidinol_DH"/>
</dbReference>
<dbReference type="InterPro" id="IPR016163">
    <property type="entry name" value="Ald_DH_C"/>
</dbReference>
<dbReference type="InterPro" id="IPR016162">
    <property type="entry name" value="Ald_DH_N"/>
</dbReference>
<dbReference type="InterPro" id="IPR015590">
    <property type="entry name" value="Aldehyde_DH_dom"/>
</dbReference>
<dbReference type="InterPro" id="IPR020593">
    <property type="entry name" value="G-glutamylP_reductase_CS"/>
</dbReference>
<dbReference type="InterPro" id="IPR012134">
    <property type="entry name" value="Glu-5-SA_DH"/>
</dbReference>
<dbReference type="InterPro" id="IPR000965">
    <property type="entry name" value="GPR_dom"/>
</dbReference>
<dbReference type="NCBIfam" id="NF001221">
    <property type="entry name" value="PRK00197.1"/>
    <property type="match status" value="1"/>
</dbReference>
<dbReference type="NCBIfam" id="TIGR00407">
    <property type="entry name" value="proA"/>
    <property type="match status" value="1"/>
</dbReference>
<dbReference type="PANTHER" id="PTHR11063:SF8">
    <property type="entry name" value="DELTA-1-PYRROLINE-5-CARBOXYLATE SYNTHASE"/>
    <property type="match status" value="1"/>
</dbReference>
<dbReference type="PANTHER" id="PTHR11063">
    <property type="entry name" value="GLUTAMATE SEMIALDEHYDE DEHYDROGENASE"/>
    <property type="match status" value="1"/>
</dbReference>
<dbReference type="Pfam" id="PF00171">
    <property type="entry name" value="Aldedh"/>
    <property type="match status" value="1"/>
</dbReference>
<dbReference type="PIRSF" id="PIRSF000151">
    <property type="entry name" value="GPR"/>
    <property type="match status" value="1"/>
</dbReference>
<dbReference type="SUPFAM" id="SSF53720">
    <property type="entry name" value="ALDH-like"/>
    <property type="match status" value="1"/>
</dbReference>
<dbReference type="PROSITE" id="PS01223">
    <property type="entry name" value="PROA"/>
    <property type="match status" value="1"/>
</dbReference>
<reference key="1">
    <citation type="journal article" date="2000" name="Nucleic Acids Res.">
        <title>Complete genome sequence of the alkaliphilic bacterium Bacillus halodurans and genomic sequence comparison with Bacillus subtilis.</title>
        <authorList>
            <person name="Takami H."/>
            <person name="Nakasone K."/>
            <person name="Takaki Y."/>
            <person name="Maeno G."/>
            <person name="Sasaki R."/>
            <person name="Masui N."/>
            <person name="Fuji F."/>
            <person name="Hirama C."/>
            <person name="Nakamura Y."/>
            <person name="Ogasawara N."/>
            <person name="Kuhara S."/>
            <person name="Horikoshi K."/>
        </authorList>
    </citation>
    <scope>NUCLEOTIDE SEQUENCE [LARGE SCALE GENOMIC DNA]</scope>
    <source>
        <strain>ATCC BAA-125 / DSM 18197 / FERM 7344 / JCM 9153 / C-125</strain>
    </source>
</reference>
<feature type="chain" id="PRO_0000189691" description="Gamma-glutamyl phosphate reductase">
    <location>
        <begin position="1"/>
        <end position="416"/>
    </location>
</feature>
<name>PROA_HALH5</name>
<proteinExistence type="inferred from homology"/>
<keyword id="KW-0028">Amino-acid biosynthesis</keyword>
<keyword id="KW-0963">Cytoplasm</keyword>
<keyword id="KW-0521">NADP</keyword>
<keyword id="KW-0560">Oxidoreductase</keyword>
<keyword id="KW-0641">Proline biosynthesis</keyword>
<keyword id="KW-1185">Reference proteome</keyword>
<sequence>MSELIEKAKQAQQASKQLAILTTEEKNRALKQIADQLLVERTYLIEENQKDIEAGQRAGISQTLLDRLLLTDERVQAMAEGVEQVIALDDPIGDQIDEFTRPNGLNIRQVRVPLGVIGMIYEARPNVTVDASVLCLKSGNAVLLRGSSSALHSNKALVSVIHRGLEAANVIPKDAVQLLEDTSRETAKEMFKLNDYLDVLIPRGGANLIQSVVKEASVPVLETGVGNCHVYIDESADPEMAVAIAVNAKTQRPSVCNAAETILVHSAWAKEHVSKLIEELRIKEVQIAGDEQIKAVAPFVKPADESDWGTEYLDLQVAMKIVNSVDEAIAHIDRYGSKHSEAIVSETDANVRKFLTNVDATTVYHNASTRFTDGFEFGFGAEIGISTQKLHARGPMGLRALTSSKYVVHGTGQIKK</sequence>
<protein>
    <recommendedName>
        <fullName evidence="1">Gamma-glutamyl phosphate reductase</fullName>
        <shortName evidence="1">GPR</shortName>
        <ecNumber evidence="1">1.2.1.41</ecNumber>
    </recommendedName>
    <alternativeName>
        <fullName evidence="1">Glutamate-5-semialdehyde dehydrogenase</fullName>
    </alternativeName>
    <alternativeName>
        <fullName evidence="1">Glutamyl-gamma-semialdehyde dehydrogenase</fullName>
        <shortName evidence="1">GSA dehydrogenase</shortName>
    </alternativeName>
</protein>
<evidence type="ECO:0000255" key="1">
    <source>
        <dbReference type="HAMAP-Rule" id="MF_00412"/>
    </source>
</evidence>
<gene>
    <name evidence="1" type="primary">proA</name>
    <name type="ordered locus">BH1504</name>
</gene>
<comment type="function">
    <text evidence="1">Catalyzes the NADPH-dependent reduction of L-glutamate 5-phosphate into L-glutamate 5-semialdehyde and phosphate. The product spontaneously undergoes cyclization to form 1-pyrroline-5-carboxylate.</text>
</comment>
<comment type="catalytic activity">
    <reaction evidence="1">
        <text>L-glutamate 5-semialdehyde + phosphate + NADP(+) = L-glutamyl 5-phosphate + NADPH + H(+)</text>
        <dbReference type="Rhea" id="RHEA:19541"/>
        <dbReference type="ChEBI" id="CHEBI:15378"/>
        <dbReference type="ChEBI" id="CHEBI:43474"/>
        <dbReference type="ChEBI" id="CHEBI:57783"/>
        <dbReference type="ChEBI" id="CHEBI:58066"/>
        <dbReference type="ChEBI" id="CHEBI:58274"/>
        <dbReference type="ChEBI" id="CHEBI:58349"/>
        <dbReference type="EC" id="1.2.1.41"/>
    </reaction>
</comment>
<comment type="pathway">
    <text evidence="1">Amino-acid biosynthesis; L-proline biosynthesis; L-glutamate 5-semialdehyde from L-glutamate: step 2/2.</text>
</comment>
<comment type="subcellular location">
    <subcellularLocation>
        <location evidence="1">Cytoplasm</location>
    </subcellularLocation>
</comment>
<comment type="similarity">
    <text evidence="1">Belongs to the gamma-glutamyl phosphate reductase family.</text>
</comment>
<organism>
    <name type="scientific">Halalkalibacterium halodurans (strain ATCC BAA-125 / DSM 18197 / FERM 7344 / JCM 9153 / C-125)</name>
    <name type="common">Bacillus halodurans</name>
    <dbReference type="NCBI Taxonomy" id="272558"/>
    <lineage>
        <taxon>Bacteria</taxon>
        <taxon>Bacillati</taxon>
        <taxon>Bacillota</taxon>
        <taxon>Bacilli</taxon>
        <taxon>Bacillales</taxon>
        <taxon>Bacillaceae</taxon>
        <taxon>Halalkalibacterium (ex Joshi et al. 2022)</taxon>
    </lineage>
</organism>